<sequence>MKTGALTTFLALCLPVTVFATTLRLSNEVDLLVLDGKKVSSSLLRGAESIELENGPHQLVFRVEKTIRLPGNEERLYISPPLVISFDTQLINQVNFQLPRLENEREASHFNAAPRLALLDGDAMPIPVKLDILAITSTAKVVDYEIETERYNKSAKRASLPQFATMMADDSTLLSDVSELDTVPPQSQTLTEQRLKYWFRLADPQTRHHFLQWAEKQPPS</sequence>
<keyword id="KW-0732">Signal</keyword>
<feature type="signal peptide" evidence="1">
    <location>
        <begin position="1"/>
        <end position="20"/>
    </location>
</feature>
<feature type="chain" id="PRO_1000200497" description="UPF0319 protein YccT">
    <location>
        <begin position="21"/>
        <end position="220"/>
    </location>
</feature>
<evidence type="ECO:0000255" key="1">
    <source>
        <dbReference type="HAMAP-Rule" id="MF_00789"/>
    </source>
</evidence>
<reference key="1">
    <citation type="journal article" date="2011" name="J. Bacteriol.">
        <title>Comparative genomics of 28 Salmonella enterica isolates: evidence for CRISPR-mediated adaptive sublineage evolution.</title>
        <authorList>
            <person name="Fricke W.F."/>
            <person name="Mammel M.K."/>
            <person name="McDermott P.F."/>
            <person name="Tartera C."/>
            <person name="White D.G."/>
            <person name="Leclerc J.E."/>
            <person name="Ravel J."/>
            <person name="Cebula T.A."/>
        </authorList>
    </citation>
    <scope>NUCLEOTIDE SEQUENCE [LARGE SCALE GENOMIC DNA]</scope>
    <source>
        <strain>CVM19633</strain>
    </source>
</reference>
<gene>
    <name evidence="1" type="primary">yccT</name>
    <name type="ordered locus">SeSA_A1140</name>
</gene>
<dbReference type="EMBL" id="CP001127">
    <property type="protein sequence ID" value="ACF90984.1"/>
    <property type="molecule type" value="Genomic_DNA"/>
</dbReference>
<dbReference type="RefSeq" id="WP_000847729.1">
    <property type="nucleotide sequence ID" value="NC_011094.1"/>
</dbReference>
<dbReference type="KEGG" id="sew:SeSA_A1140"/>
<dbReference type="HOGENOM" id="CLU_073782_2_0_6"/>
<dbReference type="Proteomes" id="UP000001865">
    <property type="component" value="Chromosome"/>
</dbReference>
<dbReference type="HAMAP" id="MF_00789">
    <property type="entry name" value="UPF0319"/>
    <property type="match status" value="1"/>
</dbReference>
<dbReference type="InterPro" id="IPR018635">
    <property type="entry name" value="UPF0319"/>
</dbReference>
<dbReference type="NCBIfam" id="NF047712">
    <property type="entry name" value="CrliSynInhib"/>
    <property type="match status" value="1"/>
</dbReference>
<dbReference type="NCBIfam" id="NF002967">
    <property type="entry name" value="PRK03641.1"/>
    <property type="match status" value="1"/>
</dbReference>
<dbReference type="PANTHER" id="PTHR38108">
    <property type="entry name" value="UPF0319 PROTEIN YCCT"/>
    <property type="match status" value="1"/>
</dbReference>
<dbReference type="PANTHER" id="PTHR38108:SF1">
    <property type="entry name" value="UPF0319 PROTEIN YCCT"/>
    <property type="match status" value="1"/>
</dbReference>
<dbReference type="Pfam" id="PF09829">
    <property type="entry name" value="DUF2057"/>
    <property type="match status" value="1"/>
</dbReference>
<protein>
    <recommendedName>
        <fullName evidence="1">UPF0319 protein YccT</fullName>
    </recommendedName>
</protein>
<proteinExistence type="inferred from homology"/>
<name>YCCT_SALSV</name>
<accession>B4TSJ0</accession>
<comment type="similarity">
    <text evidence="1">Belongs to the UPF0319 family.</text>
</comment>
<organism>
    <name type="scientific">Salmonella schwarzengrund (strain CVM19633)</name>
    <dbReference type="NCBI Taxonomy" id="439843"/>
    <lineage>
        <taxon>Bacteria</taxon>
        <taxon>Pseudomonadati</taxon>
        <taxon>Pseudomonadota</taxon>
        <taxon>Gammaproteobacteria</taxon>
        <taxon>Enterobacterales</taxon>
        <taxon>Enterobacteriaceae</taxon>
        <taxon>Salmonella</taxon>
    </lineage>
</organism>